<evidence type="ECO:0000255" key="1"/>
<evidence type="ECO:0000256" key="2">
    <source>
        <dbReference type="SAM" id="MobiDB-lite"/>
    </source>
</evidence>
<evidence type="ECO:0000269" key="3">
    <source>
    </source>
</evidence>
<evidence type="ECO:0000303" key="4">
    <source>
    </source>
</evidence>
<evidence type="ECO:0000305" key="5"/>
<evidence type="ECO:0000312" key="6">
    <source>
        <dbReference type="EMBL" id="VUC57675.1"/>
    </source>
</evidence>
<evidence type="ECO:0000312" key="7">
    <source>
        <dbReference type="Proteomes" id="UP000074855"/>
    </source>
</evidence>
<organism evidence="7">
    <name type="scientific">Plasmodium berghei (strain Anka)</name>
    <dbReference type="NCBI Taxonomy" id="5823"/>
    <lineage>
        <taxon>Eukaryota</taxon>
        <taxon>Sar</taxon>
        <taxon>Alveolata</taxon>
        <taxon>Apicomplexa</taxon>
        <taxon>Aconoidasida</taxon>
        <taxon>Haemosporida</taxon>
        <taxon>Plasmodiidae</taxon>
        <taxon>Plasmodium</taxon>
        <taxon>Plasmodium (Vinckeia)</taxon>
    </lineage>
</organism>
<reference evidence="7" key="1">
    <citation type="journal article" date="2014" name="BMC Biol.">
        <title>A comprehensive evaluation of rodent malaria parasite genomes and gene expression.</title>
        <authorList>
            <person name="Otto T.D."/>
            <person name="Bohme U."/>
            <person name="Jackson A.P."/>
            <person name="Hunt M."/>
            <person name="Franke-Fayard B."/>
            <person name="Hoeijmakers W.A."/>
            <person name="Religa A.A."/>
            <person name="Robertson L."/>
            <person name="Sanders M."/>
            <person name="Ogun S.A."/>
            <person name="Cunningham D."/>
            <person name="Erhart A."/>
            <person name="Billker O."/>
            <person name="Khan S.M."/>
            <person name="Stunnenberg H.G."/>
            <person name="Langhorne J."/>
            <person name="Holder A.A."/>
            <person name="Waters A.P."/>
            <person name="Newbold C.I."/>
            <person name="Pain A."/>
            <person name="Berriman M."/>
            <person name="Janse C.J."/>
        </authorList>
    </citation>
    <scope>NUCLEOTIDE SEQUENCE [LARGE SCALE GENOMIC DNA]</scope>
    <source>
        <strain evidence="7">ANKA</strain>
    </source>
</reference>
<reference evidence="5" key="2">
    <citation type="journal article" date="2017" name="Biochem. Biophys. Res. Commun.">
        <title>Functional characterization of malaria parasites deficient in the K+ channel Kch2.</title>
        <authorList>
            <person name="Ellekvist P."/>
            <person name="Mlambo G."/>
            <person name="Kumar N."/>
            <person name="Klaerke D.A."/>
        </authorList>
    </citation>
    <scope>FUNCTION</scope>
    <scope>DISRUPTION PHENOTYPE</scope>
</reference>
<name>KCH2_PLABA</name>
<keyword id="KW-0175">Coiled coil</keyword>
<keyword id="KW-0407">Ion channel</keyword>
<keyword id="KW-0406">Ion transport</keyword>
<keyword id="KW-0472">Membrane</keyword>
<keyword id="KW-0630">Potassium</keyword>
<keyword id="KW-0631">Potassium channel</keyword>
<keyword id="KW-0633">Potassium transport</keyword>
<keyword id="KW-1185">Reference proteome</keyword>
<keyword id="KW-0812">Transmembrane</keyword>
<keyword id="KW-1133">Transmembrane helix</keyword>
<keyword id="KW-0813">Transport</keyword>
<feature type="chain" id="PRO_0000460820" description="Potassium channel K2">
    <location>
        <begin position="1"/>
        <end position="1468"/>
    </location>
</feature>
<feature type="transmembrane region" description="Helical" evidence="1">
    <location>
        <begin position="48"/>
        <end position="68"/>
    </location>
</feature>
<feature type="transmembrane region" description="Helical" evidence="1">
    <location>
        <begin position="146"/>
        <end position="165"/>
    </location>
</feature>
<feature type="transmembrane region" description="Helical" evidence="1">
    <location>
        <begin position="185"/>
        <end position="209"/>
    </location>
</feature>
<feature type="transmembrane region" description="Helical" evidence="1">
    <location>
        <begin position="221"/>
        <end position="240"/>
    </location>
</feature>
<feature type="transmembrane region" description="Helical" evidence="1">
    <location>
        <begin position="246"/>
        <end position="264"/>
    </location>
</feature>
<feature type="transmembrane region" description="Helical" evidence="1">
    <location>
        <begin position="285"/>
        <end position="306"/>
    </location>
</feature>
<feature type="intramembrane region" description="Pore-forming" evidence="4">
    <location>
        <begin position="326"/>
        <end position="344"/>
    </location>
</feature>
<feature type="transmembrane region" description="Helical" evidence="1">
    <location>
        <begin position="351"/>
        <end position="368"/>
    </location>
</feature>
<feature type="region of interest" description="Disordered" evidence="2">
    <location>
        <begin position="804"/>
        <end position="823"/>
    </location>
</feature>
<feature type="coiled-coil region" evidence="1">
    <location>
        <begin position="1141"/>
        <end position="1185"/>
    </location>
</feature>
<feature type="compositionally biased region" description="Basic residues" evidence="2">
    <location>
        <begin position="814"/>
        <end position="823"/>
    </location>
</feature>
<gene>
    <name evidence="7" type="ORF">PBANKA_1328900</name>
</gene>
<comment type="function">
    <text evidence="4">May be involved in transmembrane potassium transport at the subcellular level not affecting bulk potassium transport across the plasma membrane.</text>
</comment>
<comment type="subcellular location">
    <subcellularLocation>
        <location evidence="1">Membrane</location>
        <topology evidence="1">Multi-pass membrane protein</topology>
    </subcellularLocation>
</comment>
<comment type="disruption phenotype">
    <text evidence="3">No significant effects on the uptake of the K(+) congener 86Rb(+) by parasites (PubMed:28864420). No significant effects on survival of infected mice (PubMed:28864420). No significant effects on oocyst development in the midgut of Anopheles stephensi mosquitoes (PubMed:28864420).</text>
</comment>
<sequence length="1468" mass="172709">MKTEFLSINDIFFLVKIGFKYVLALFNGFYLIKIVSYPNEHSIITNKMIYIGIGILLKIILIIIYWIYFMDIYILKKNCNKKFFGNIYCNSNKIIDNNISTTIIESDDFEYKKLIKKFFLKKMYYSLKKGHKIVKLYMLKIYNSDFNCYFCNTRDILYAIIWYISLYYWRRDEYNILWSFNKIPIYIYNILLILLSSSYIDLVMIIISYNKSKYHMMKSKLLIDVFFSSPSAFFFSRHFFVLENGIDIYFLMGFLRIIKVFLNVSYAKTEQSYILTNTEIKVIRIILGVLLLCNAFASTLYTIQGIHPYNIDNHDLYYILNNYLDYFYFSIISISTVGYGDIIPTNKLSRVICIFFIFWTFIWVPIQFNDLIISIFCKKETYGKLSMNNQKLILLIGDIQPEQLNTFFFESVAYGNKLKFHILTTYPINLYEEQIKIADNYCISIYIKNFDLNEKHNTNLLYSVNAQNAYYMFLFSNKFNNGHYNIDTKSFTRLLILAKFLHGEKKNAVIELRNKCVSNIVKSIGCEHFAIVNLKHSLIVKNLVCPGFITFLSNLFTAYNYNENPYYFNNSKYLHSFNFIAEFNKGSIAKIFSFAAHDNMIGLNFDKLFYKLYESLGILLIGIESSHINNNHFVYSNKKRLNFFFENVGRSMIKGNGIRDRTRKTGKIGGHKKFKFKLVYLCFLKRYIHSLSRDNCDNTQMITILNCKKNNSKMNKLNKKFYLKEIPNLLEMLNNHVHLTNKSNLSTPTWNNGIKESYKEKNIKSYHYIIDTNNINVAYKNNIPEKGKKDRGGIYIGNKHTNDTCARTNESHKNNRLRSRRSQNGKPYLGILKNCNNELFHTKKMNNYYESYRNNSNINEISIPNKRNGKPKCYLNLLGKNYFMKENDKCIVLANSKKVINYLSKAKSLFWLFEINSTKMDKVTYDLKSIIKTKQYFNKIPTSNLVKNIPIMPHMKNKSIISKHDSKIIPMDYYDLFNAYKSFRVFPQINYGITKNMLRVSYKENFNNDINNNRSIGDRSNSNSFSKLGMDKSTLSLTKFSNENSHMDSNSNDNYTVNYEHSDQAFFKGCVNWGGCNNGNTNIRENAQNEVYSINDVMNSVIKMEADKYTFEVNLNDTILVENDYNVLQKNNIKNFASIKKSNKNSNNNNKCEQIKQLNNNLTFKKNEKKTKSNKQNTNDTLERRKNGVAYSYLDACQKYFAHSAKNKKLLLLINYASNIIQLVKLINKTCKYNIIILTSEISSINIHHIYNVAFIKCKTMDDYSLLNAGLLQAEYILILPTEVNDINEINEIDMNNIILTRKITYLLKKKKKNYFINNIITELINPTNIIFLEENNMIKMTEKKSSYSDFFPYINSTQFYSSNIISETMLYNFMAHHKSFTKFPVSNSTLKCLIKDINIIYVCELRKYSDFSFKKIKTFRDLFFFLSKKCIIAIALYRKGDKYVPFYIYTKPCENCLIRFDDIVYVL</sequence>
<accession>A0A509AS68</accession>
<proteinExistence type="inferred from homology"/>
<protein>
    <recommendedName>
        <fullName evidence="6">Potassium channel K2</fullName>
        <shortName evidence="4">PbKch2</shortName>
    </recommendedName>
</protein>
<dbReference type="EMBL" id="LK023128">
    <property type="protein sequence ID" value="VUC57675.1"/>
    <property type="molecule type" value="Genomic_DNA"/>
</dbReference>
<dbReference type="RefSeq" id="XP_034423445.1">
    <property type="nucleotide sequence ID" value="XM_034566893.1"/>
</dbReference>
<dbReference type="STRING" id="5823.A0A509AS68"/>
<dbReference type="GeneID" id="55151635"/>
<dbReference type="VEuPathDB" id="PlasmoDB:PBANKA_1328900"/>
<dbReference type="InParanoid" id="A0A509AS68"/>
<dbReference type="OMA" id="WLFEIKS"/>
<dbReference type="PHI-base" id="PHI:9779"/>
<dbReference type="Proteomes" id="UP000074855">
    <property type="component" value="Chromosome 13"/>
</dbReference>
<dbReference type="GO" id="GO:0016020">
    <property type="term" value="C:membrane"/>
    <property type="evidence" value="ECO:0007669"/>
    <property type="project" value="UniProtKB-SubCell"/>
</dbReference>
<dbReference type="GO" id="GO:0005267">
    <property type="term" value="F:potassium channel activity"/>
    <property type="evidence" value="ECO:0007669"/>
    <property type="project" value="UniProtKB-KW"/>
</dbReference>
<dbReference type="Gene3D" id="1.10.287.70">
    <property type="match status" value="1"/>
</dbReference>
<dbReference type="InterPro" id="IPR003929">
    <property type="entry name" value="K_chnl_BK_asu"/>
</dbReference>
<dbReference type="InterPro" id="IPR013099">
    <property type="entry name" value="K_chnl_dom"/>
</dbReference>
<dbReference type="InterPro" id="IPR047871">
    <property type="entry name" value="K_chnl_Slo-like"/>
</dbReference>
<dbReference type="PANTHER" id="PTHR10027">
    <property type="entry name" value="CALCIUM-ACTIVATED POTASSIUM CHANNEL ALPHA CHAIN"/>
    <property type="match status" value="1"/>
</dbReference>
<dbReference type="PANTHER" id="PTHR10027:SF10">
    <property type="entry name" value="SLOWPOKE 2, ISOFORM D"/>
    <property type="match status" value="1"/>
</dbReference>
<dbReference type="Pfam" id="PF03493">
    <property type="entry name" value="BK_channel_a"/>
    <property type="match status" value="1"/>
</dbReference>
<dbReference type="Pfam" id="PF07885">
    <property type="entry name" value="Ion_trans_2"/>
    <property type="match status" value="1"/>
</dbReference>
<dbReference type="SUPFAM" id="SSF81324">
    <property type="entry name" value="Voltage-gated potassium channels"/>
    <property type="match status" value="1"/>
</dbReference>